<name>RETR1_CAEEL</name>
<accession>P34431</accession>
<accession>P34432</accession>
<accession>Q8I7K0</accession>
<reference key="1">
    <citation type="journal article" date="1994" name="Nature">
        <title>2.2 Mb of contiguous nucleotide sequence from chromosome III of C. elegans.</title>
        <authorList>
            <person name="Wilson R."/>
            <person name="Ainscough R."/>
            <person name="Anderson K."/>
            <person name="Baynes C."/>
            <person name="Berks M."/>
            <person name="Bonfield J."/>
            <person name="Burton J."/>
            <person name="Connell M."/>
            <person name="Copsey T."/>
            <person name="Cooper J."/>
            <person name="Coulson A."/>
            <person name="Craxton M."/>
            <person name="Dear S."/>
            <person name="Du Z."/>
            <person name="Durbin R."/>
            <person name="Favello A."/>
            <person name="Fraser A."/>
            <person name="Fulton L."/>
            <person name="Gardner A."/>
            <person name="Green P."/>
            <person name="Hawkins T."/>
            <person name="Hillier L."/>
            <person name="Jier M."/>
            <person name="Johnston L."/>
            <person name="Jones M."/>
            <person name="Kershaw J."/>
            <person name="Kirsten J."/>
            <person name="Laisster N."/>
            <person name="Latreille P."/>
            <person name="Lightning J."/>
            <person name="Lloyd C."/>
            <person name="Mortimore B."/>
            <person name="O'Callaghan M."/>
            <person name="Parsons J."/>
            <person name="Percy C."/>
            <person name="Rifken L."/>
            <person name="Roopra A."/>
            <person name="Saunders D."/>
            <person name="Shownkeen R."/>
            <person name="Sims M."/>
            <person name="Smaldon N."/>
            <person name="Smith A."/>
            <person name="Smith M."/>
            <person name="Sonnhammer E."/>
            <person name="Staden R."/>
            <person name="Sulston J."/>
            <person name="Thierry-Mieg J."/>
            <person name="Thomas K."/>
            <person name="Vaudin M."/>
            <person name="Vaughan K."/>
            <person name="Waterston R."/>
            <person name="Watson A."/>
            <person name="Weinstock L."/>
            <person name="Wilkinson-Sproat J."/>
            <person name="Wohldman P."/>
        </authorList>
    </citation>
    <scope>NUCLEOTIDE SEQUENCE [LARGE SCALE GENOMIC DNA]</scope>
    <source>
        <strain>Bristol N2</strain>
    </source>
</reference>
<reference key="2">
    <citation type="journal article" date="1998" name="Science">
        <title>Genome sequence of the nematode C. elegans: a platform for investigating biology.</title>
        <authorList>
            <consortium name="The C. elegans sequencing consortium"/>
        </authorList>
    </citation>
    <scope>NUCLEOTIDE SEQUENCE [LARGE SCALE GENOMIC DNA]</scope>
    <source>
        <strain>Bristol N2</strain>
    </source>
</reference>
<proteinExistence type="predicted"/>
<organism>
    <name type="scientific">Caenorhabditis elegans</name>
    <dbReference type="NCBI Taxonomy" id="6239"/>
    <lineage>
        <taxon>Eukaryota</taxon>
        <taxon>Metazoa</taxon>
        <taxon>Ecdysozoa</taxon>
        <taxon>Nematoda</taxon>
        <taxon>Chromadorea</taxon>
        <taxon>Rhabditida</taxon>
        <taxon>Rhabditina</taxon>
        <taxon>Rhabditomorpha</taxon>
        <taxon>Rhabditoidea</taxon>
        <taxon>Rhabditidae</taxon>
        <taxon>Peloderinae</taxon>
        <taxon>Caenorhabditis</taxon>
    </lineage>
</organism>
<dbReference type="EC" id="3.4.23.-"/>
<dbReference type="EMBL" id="FO081383">
    <property type="protein sequence ID" value="CCD71231.1"/>
    <property type="molecule type" value="Genomic_DNA"/>
</dbReference>
<dbReference type="SMR" id="P34431"/>
<dbReference type="BioGRID" id="41450">
    <property type="interactions" value="4"/>
</dbReference>
<dbReference type="FunCoup" id="P34431">
    <property type="interactions" value="135"/>
</dbReference>
<dbReference type="IntAct" id="P34431">
    <property type="interactions" value="1"/>
</dbReference>
<dbReference type="iPTMnet" id="P34431"/>
<dbReference type="PaxDb" id="6239-F44E2.2c"/>
<dbReference type="PeptideAtlas" id="P34431"/>
<dbReference type="UCSC" id="F44E2.2a.1">
    <property type="organism name" value="c. elegans"/>
</dbReference>
<dbReference type="WormBase" id="F44E2.2c">
    <property type="protein sequence ID" value="CE41402"/>
    <property type="gene ID" value="WBGene00018416"/>
    <property type="gene designation" value="retr-1"/>
</dbReference>
<dbReference type="eggNOG" id="ENOG502TJ69">
    <property type="taxonomic scope" value="Eukaryota"/>
</dbReference>
<dbReference type="HOGENOM" id="CLU_527029_0_0_1"/>
<dbReference type="InParanoid" id="P34431"/>
<dbReference type="PRO" id="PR:P34431"/>
<dbReference type="Proteomes" id="UP000001940">
    <property type="component" value="Chromosome III"/>
</dbReference>
<dbReference type="GO" id="GO:0016787">
    <property type="term" value="F:hydrolase activity"/>
    <property type="evidence" value="ECO:0007669"/>
    <property type="project" value="UniProtKB-KW"/>
</dbReference>
<feature type="chain" id="PRO_0000199560" description="Retrotransposon-like protein 1">
    <location>
        <begin position="1"/>
        <end position="517"/>
    </location>
</feature>
<feature type="region of interest" description="Disordered" evidence="1">
    <location>
        <begin position="1"/>
        <end position="29"/>
    </location>
</feature>
<feature type="region of interest" description="Disordered" evidence="1">
    <location>
        <begin position="142"/>
        <end position="161"/>
    </location>
</feature>
<gene>
    <name type="primary">retr-1</name>
    <name type="ORF">F44E2.2</name>
</gene>
<protein>
    <recommendedName>
        <fullName>Retrotransposon-like protein 1</fullName>
        <ecNumber>3.4.23.-</ecNumber>
    </recommendedName>
</protein>
<keyword id="KW-0378">Hydrolase</keyword>
<keyword id="KW-1185">Reference proteome</keyword>
<sequence length="517" mass="60214">MEVNEGQDTEGGSSRAQTLTPPPNPQQQLYDEEDLLRESMDTTEKTFENGFQIQKEQIRQHLQDSSQRGTAEDAETQKMKQFLDTNELHNMASDSWAMMREEIMEKRETNRDLNRQLKEKSEELMQKSQILVETTLKLKAVEEERDKRKKEEQFREADARSNNYARKDHGYKMHNIELKNEYTSTTYRCRYICRCALKPCMFNMTLVPEAHTPSPTQLYRMYCIMEKSGNRKIDPKQLMAMSSRPLPSPLQITLPDKMMDNLFKDMIGCSSLWTYVAELGWENSYNRYVDKLLNENCGDILNGPGTMLILADGLRLEDLPVSTKNCFVCTDYDEETLIALQKKCCRERFKMIVLVIPFTIDVELVDCWNRLIAKISEETKILVVSNMTPDELEDHALLVEFTSILQKCRRVDDGYLEIISLHDRLEAHPRKTLEMTALAGKVEYWKAVQTRAKEVGMEWKAFELKRCTSDTPVKNSDCEASTSMKSASTVRTFEDRMVKRGNHNRVYHHFTPYGRKK</sequence>
<evidence type="ECO:0000256" key="1">
    <source>
        <dbReference type="SAM" id="MobiDB-lite"/>
    </source>
</evidence>